<gene>
    <name evidence="1" type="primary">hprK</name>
    <name type="ordered locus">SAS0725</name>
</gene>
<protein>
    <recommendedName>
        <fullName evidence="1">HPr kinase/phosphorylase</fullName>
        <shortName evidence="1">HPrK/P</shortName>
        <ecNumber evidence="1">2.7.11.-</ecNumber>
        <ecNumber evidence="1">2.7.4.-</ecNumber>
    </recommendedName>
    <alternativeName>
        <fullName evidence="1">HPr(Ser) kinase/phosphorylase</fullName>
    </alternativeName>
</protein>
<name>HPRK_STAAS</name>
<evidence type="ECO:0000255" key="1">
    <source>
        <dbReference type="HAMAP-Rule" id="MF_01249"/>
    </source>
</evidence>
<reference key="1">
    <citation type="journal article" date="2004" name="Proc. Natl. Acad. Sci. U.S.A.">
        <title>Complete genomes of two clinical Staphylococcus aureus strains: evidence for the rapid evolution of virulence and drug resistance.</title>
        <authorList>
            <person name="Holden M.T.G."/>
            <person name="Feil E.J."/>
            <person name="Lindsay J.A."/>
            <person name="Peacock S.J."/>
            <person name="Day N.P.J."/>
            <person name="Enright M.C."/>
            <person name="Foster T.J."/>
            <person name="Moore C.E."/>
            <person name="Hurst L."/>
            <person name="Atkin R."/>
            <person name="Barron A."/>
            <person name="Bason N."/>
            <person name="Bentley S.D."/>
            <person name="Chillingworth C."/>
            <person name="Chillingworth T."/>
            <person name="Churcher C."/>
            <person name="Clark L."/>
            <person name="Corton C."/>
            <person name="Cronin A."/>
            <person name="Doggett J."/>
            <person name="Dowd L."/>
            <person name="Feltwell T."/>
            <person name="Hance Z."/>
            <person name="Harris B."/>
            <person name="Hauser H."/>
            <person name="Holroyd S."/>
            <person name="Jagels K."/>
            <person name="James K.D."/>
            <person name="Lennard N."/>
            <person name="Line A."/>
            <person name="Mayes R."/>
            <person name="Moule S."/>
            <person name="Mungall K."/>
            <person name="Ormond D."/>
            <person name="Quail M.A."/>
            <person name="Rabbinowitsch E."/>
            <person name="Rutherford K.M."/>
            <person name="Sanders M."/>
            <person name="Sharp S."/>
            <person name="Simmonds M."/>
            <person name="Stevens K."/>
            <person name="Whitehead S."/>
            <person name="Barrell B.G."/>
            <person name="Spratt B.G."/>
            <person name="Parkhill J."/>
        </authorList>
    </citation>
    <scope>NUCLEOTIDE SEQUENCE [LARGE SCALE GENOMIC DNA]</scope>
    <source>
        <strain>MSSA476</strain>
    </source>
</reference>
<comment type="function">
    <text evidence="1">Catalyzes the ATP- as well as the pyrophosphate-dependent phosphorylation of a specific serine residue in HPr, a phosphocarrier protein of the phosphoenolpyruvate-dependent sugar phosphotransferase system (PTS). HprK/P also catalyzes the pyrophosphate-producing, inorganic phosphate-dependent dephosphorylation (phosphorolysis) of seryl-phosphorylated HPr (P-Ser-HPr). The two antagonistic activities of HprK/P are regulated by several intracellular metabolites, which change their concentration in response to the absence or presence of rapidly metabolisable carbon sources (glucose, fructose, etc.) in the growth medium. Therefore, by controlling the phosphorylation state of HPr, HPrK/P is a sensor enzyme that plays a major role in the regulation of carbon metabolism and sugar transport: it mediates carbon catabolite repression (CCR), and regulates PTS-catalyzed carbohydrate uptake and inducer exclusion.</text>
</comment>
<comment type="catalytic activity">
    <reaction evidence="1">
        <text>[HPr protein]-L-serine + ATP = [HPr protein]-O-phospho-L-serine + ADP + H(+)</text>
        <dbReference type="Rhea" id="RHEA:46600"/>
        <dbReference type="Rhea" id="RHEA-COMP:11602"/>
        <dbReference type="Rhea" id="RHEA-COMP:11603"/>
        <dbReference type="ChEBI" id="CHEBI:15378"/>
        <dbReference type="ChEBI" id="CHEBI:29999"/>
        <dbReference type="ChEBI" id="CHEBI:30616"/>
        <dbReference type="ChEBI" id="CHEBI:83421"/>
        <dbReference type="ChEBI" id="CHEBI:456216"/>
    </reaction>
</comment>
<comment type="catalytic activity">
    <reaction evidence="1">
        <text>[HPr protein]-O-phospho-L-serine + phosphate + H(+) = [HPr protein]-L-serine + diphosphate</text>
        <dbReference type="Rhea" id="RHEA:46604"/>
        <dbReference type="Rhea" id="RHEA-COMP:11602"/>
        <dbReference type="Rhea" id="RHEA-COMP:11603"/>
        <dbReference type="ChEBI" id="CHEBI:15378"/>
        <dbReference type="ChEBI" id="CHEBI:29999"/>
        <dbReference type="ChEBI" id="CHEBI:33019"/>
        <dbReference type="ChEBI" id="CHEBI:43474"/>
        <dbReference type="ChEBI" id="CHEBI:83421"/>
    </reaction>
</comment>
<comment type="cofactor">
    <cofactor evidence="1">
        <name>Mg(2+)</name>
        <dbReference type="ChEBI" id="CHEBI:18420"/>
    </cofactor>
</comment>
<comment type="subunit">
    <text evidence="1">Homohexamer.</text>
</comment>
<comment type="domain">
    <text evidence="1">The Walker A ATP-binding motif also binds Pi and PPi.</text>
</comment>
<comment type="miscellaneous">
    <text evidence="1">Both phosphorylation and phosphorolysis are carried out by the same active site and suggest a common mechanism for both reactions.</text>
</comment>
<comment type="similarity">
    <text evidence="1">Belongs to the HPrK/P family.</text>
</comment>
<organism>
    <name type="scientific">Staphylococcus aureus (strain MSSA476)</name>
    <dbReference type="NCBI Taxonomy" id="282459"/>
    <lineage>
        <taxon>Bacteria</taxon>
        <taxon>Bacillati</taxon>
        <taxon>Bacillota</taxon>
        <taxon>Bacilli</taxon>
        <taxon>Bacillales</taxon>
        <taxon>Staphylococcaceae</taxon>
        <taxon>Staphylococcus</taxon>
    </lineage>
</organism>
<feature type="chain" id="PRO_0000058985" description="HPr kinase/phosphorylase">
    <location>
        <begin position="1"/>
        <end position="310"/>
    </location>
</feature>
<feature type="region of interest" description="Important for the catalytic mechanism of both phosphorylation and dephosphorylation" evidence="1">
    <location>
        <begin position="199"/>
        <end position="208"/>
    </location>
</feature>
<feature type="region of interest" description="Important for the catalytic mechanism of dephosphorylation" evidence="1">
    <location>
        <begin position="262"/>
        <end position="267"/>
    </location>
</feature>
<feature type="active site" evidence="1">
    <location>
        <position position="136"/>
    </location>
</feature>
<feature type="active site" evidence="1">
    <location>
        <position position="157"/>
    </location>
</feature>
<feature type="active site" description="Proton acceptor; for phosphorylation activity. Proton donor; for dephosphorylation activity" evidence="1">
    <location>
        <position position="175"/>
    </location>
</feature>
<feature type="active site" evidence="1">
    <location>
        <position position="241"/>
    </location>
</feature>
<feature type="binding site" evidence="1">
    <location>
        <begin position="151"/>
        <end position="158"/>
    </location>
    <ligand>
        <name>ATP</name>
        <dbReference type="ChEBI" id="CHEBI:30616"/>
    </ligand>
</feature>
<feature type="binding site" evidence="1">
    <location>
        <position position="158"/>
    </location>
    <ligand>
        <name>Mg(2+)</name>
        <dbReference type="ChEBI" id="CHEBI:18420"/>
    </ligand>
</feature>
<feature type="binding site" evidence="1">
    <location>
        <position position="200"/>
    </location>
    <ligand>
        <name>Mg(2+)</name>
        <dbReference type="ChEBI" id="CHEBI:18420"/>
    </ligand>
</feature>
<proteinExistence type="inferred from homology"/>
<dbReference type="EC" id="2.7.11.-" evidence="1"/>
<dbReference type="EC" id="2.7.4.-" evidence="1"/>
<dbReference type="EMBL" id="BX571857">
    <property type="protein sequence ID" value="CAG42501.1"/>
    <property type="molecule type" value="Genomic_DNA"/>
</dbReference>
<dbReference type="RefSeq" id="WP_000958224.1">
    <property type="nucleotide sequence ID" value="NC_002953.3"/>
</dbReference>
<dbReference type="SMR" id="Q6GB70"/>
<dbReference type="KEGG" id="sas:SAS0725"/>
<dbReference type="HOGENOM" id="CLU_052030_0_1_9"/>
<dbReference type="GO" id="GO:0005524">
    <property type="term" value="F:ATP binding"/>
    <property type="evidence" value="ECO:0007669"/>
    <property type="project" value="UniProtKB-UniRule"/>
</dbReference>
<dbReference type="GO" id="GO:0000287">
    <property type="term" value="F:magnesium ion binding"/>
    <property type="evidence" value="ECO:0007669"/>
    <property type="project" value="UniProtKB-UniRule"/>
</dbReference>
<dbReference type="GO" id="GO:0000155">
    <property type="term" value="F:phosphorelay sensor kinase activity"/>
    <property type="evidence" value="ECO:0007669"/>
    <property type="project" value="InterPro"/>
</dbReference>
<dbReference type="GO" id="GO:0004674">
    <property type="term" value="F:protein serine/threonine kinase activity"/>
    <property type="evidence" value="ECO:0007669"/>
    <property type="project" value="UniProtKB-KW"/>
</dbReference>
<dbReference type="GO" id="GO:0004712">
    <property type="term" value="F:protein serine/threonine/tyrosine kinase activity"/>
    <property type="evidence" value="ECO:0007669"/>
    <property type="project" value="UniProtKB-UniRule"/>
</dbReference>
<dbReference type="GO" id="GO:0006109">
    <property type="term" value="P:regulation of carbohydrate metabolic process"/>
    <property type="evidence" value="ECO:0007669"/>
    <property type="project" value="UniProtKB-UniRule"/>
</dbReference>
<dbReference type="CDD" id="cd01918">
    <property type="entry name" value="HprK_C"/>
    <property type="match status" value="1"/>
</dbReference>
<dbReference type="FunFam" id="3.40.1390.20:FF:000002">
    <property type="entry name" value="HPr kinase/phosphorylase"/>
    <property type="match status" value="1"/>
</dbReference>
<dbReference type="FunFam" id="3.40.50.300:FF:000174">
    <property type="entry name" value="HPr kinase/phosphorylase"/>
    <property type="match status" value="1"/>
</dbReference>
<dbReference type="Gene3D" id="3.40.1390.20">
    <property type="entry name" value="HprK N-terminal domain-like"/>
    <property type="match status" value="1"/>
</dbReference>
<dbReference type="Gene3D" id="3.40.50.300">
    <property type="entry name" value="P-loop containing nucleotide triphosphate hydrolases"/>
    <property type="match status" value="1"/>
</dbReference>
<dbReference type="HAMAP" id="MF_01249">
    <property type="entry name" value="HPr_kinase"/>
    <property type="match status" value="1"/>
</dbReference>
<dbReference type="InterPro" id="IPR003755">
    <property type="entry name" value="HPr(Ser)_kin/Pase"/>
</dbReference>
<dbReference type="InterPro" id="IPR011104">
    <property type="entry name" value="Hpr_kin/Pase_C"/>
</dbReference>
<dbReference type="InterPro" id="IPR011126">
    <property type="entry name" value="Hpr_kin/Pase_Hpr_N"/>
</dbReference>
<dbReference type="InterPro" id="IPR027417">
    <property type="entry name" value="P-loop_NTPase"/>
</dbReference>
<dbReference type="InterPro" id="IPR028979">
    <property type="entry name" value="Ser_kin/Pase_Hpr-like_N_sf"/>
</dbReference>
<dbReference type="NCBIfam" id="TIGR00679">
    <property type="entry name" value="hpr-ser"/>
    <property type="match status" value="1"/>
</dbReference>
<dbReference type="PANTHER" id="PTHR30305:SF1">
    <property type="entry name" value="HPR KINASE_PHOSPHORYLASE"/>
    <property type="match status" value="1"/>
</dbReference>
<dbReference type="PANTHER" id="PTHR30305">
    <property type="entry name" value="PROTEIN YJDM-RELATED"/>
    <property type="match status" value="1"/>
</dbReference>
<dbReference type="Pfam" id="PF07475">
    <property type="entry name" value="Hpr_kinase_C"/>
    <property type="match status" value="1"/>
</dbReference>
<dbReference type="Pfam" id="PF02603">
    <property type="entry name" value="Hpr_kinase_N"/>
    <property type="match status" value="1"/>
</dbReference>
<dbReference type="SUPFAM" id="SSF75138">
    <property type="entry name" value="HprK N-terminal domain-like"/>
    <property type="match status" value="1"/>
</dbReference>
<dbReference type="SUPFAM" id="SSF53795">
    <property type="entry name" value="PEP carboxykinase-like"/>
    <property type="match status" value="1"/>
</dbReference>
<accession>Q6GB70</accession>
<sequence>MLTTEKLVETLKLDLIAGEEGLSKPIKNADISRPGLEMAGYFSHYASDRIQLLGTTELSFYNLLPDKDRAGRMRKLCRPETPAIIVTRGLQPPEELVEAAKELNTPLIVAKDATTSLMSRLTTFLEHALAKTTSLHGVLVDVYGVGVLITGDSGIGKSETALELVKRGHRLVADDNVEIRQINKDELIGKPPKLIEHLLEIRGLGIINVMTLFGAGSILTEKRIRLNINLENWNKQKLYDRVGLNEETLSILDTEITKKTIPVRPGRNVAVIIEVAAMNYRLNIMGINTAEEFSERLNEEIIKNSHKSEE</sequence>
<keyword id="KW-0067">ATP-binding</keyword>
<keyword id="KW-0119">Carbohydrate metabolism</keyword>
<keyword id="KW-0418">Kinase</keyword>
<keyword id="KW-0460">Magnesium</keyword>
<keyword id="KW-0479">Metal-binding</keyword>
<keyword id="KW-0511">Multifunctional enzyme</keyword>
<keyword id="KW-0547">Nucleotide-binding</keyword>
<keyword id="KW-0723">Serine/threonine-protein kinase</keyword>
<keyword id="KW-0808">Transferase</keyword>